<geneLocation type="chloroplast"/>
<protein>
    <recommendedName>
        <fullName>Probable RuBisCO transcriptional regulator</fullName>
    </recommendedName>
</protein>
<gene>
    <name type="primary">rbcR-A</name>
    <name type="synonym">ycf30-A</name>
</gene>
<gene>
    <name type="primary">rbcR-B</name>
    <name type="synonym">ycf30-B</name>
</gene>
<comment type="function">
    <text evidence="1">Trans-acting transcriptional regulator of RuBisCO genes (rbcL and rbcS) expression.</text>
</comment>
<comment type="subcellular location">
    <subcellularLocation>
        <location>Plastid</location>
        <location>Chloroplast</location>
    </subcellularLocation>
</comment>
<comment type="similarity">
    <text evidence="3">Belongs to the LysR transcriptional regulatory family.</text>
</comment>
<proteinExistence type="inferred from homology"/>
<evidence type="ECO:0000250" key="1"/>
<evidence type="ECO:0000255" key="2">
    <source>
        <dbReference type="PROSITE-ProRule" id="PRU00253"/>
    </source>
</evidence>
<evidence type="ECO:0000305" key="3"/>
<accession>A0T0V5</accession>
<reference key="1">
    <citation type="journal article" date="2007" name="Mol. Genet. Genomics">
        <title>Chloroplast genomes of the diatoms Phaeodactylum tricornutum and Thalassiosira pseudonana: comparison with other plastid genomes of the red lineage.</title>
        <authorList>
            <person name="Oudot-Le Secq M.-P."/>
            <person name="Grimwood J."/>
            <person name="Shapiro H."/>
            <person name="Armbrust E.V."/>
            <person name="Bowler C."/>
            <person name="Green B.R."/>
        </authorList>
    </citation>
    <scope>NUCLEOTIDE SEQUENCE [LARGE SCALE GENOMIC DNA]</scope>
    <source>
        <strain>CCMP1335 / NEPCC58 / CCAP 1085/12</strain>
    </source>
</reference>
<dbReference type="EMBL" id="EF067921">
    <property type="protein sequence ID" value="ABK20790.1"/>
    <property type="molecule type" value="Genomic_DNA"/>
</dbReference>
<dbReference type="EMBL" id="EF067921">
    <property type="protein sequence ID" value="ABK20850.1"/>
    <property type="molecule type" value="Genomic_DNA"/>
</dbReference>
<dbReference type="SMR" id="A0T0V5"/>
<dbReference type="InParanoid" id="A0T0V5"/>
<dbReference type="GO" id="GO:0009507">
    <property type="term" value="C:chloroplast"/>
    <property type="evidence" value="ECO:0007669"/>
    <property type="project" value="UniProtKB-SubCell"/>
</dbReference>
<dbReference type="GO" id="GO:0003700">
    <property type="term" value="F:DNA-binding transcription factor activity"/>
    <property type="evidence" value="ECO:0007669"/>
    <property type="project" value="InterPro"/>
</dbReference>
<dbReference type="GO" id="GO:0000976">
    <property type="term" value="F:transcription cis-regulatory region binding"/>
    <property type="evidence" value="ECO:0000318"/>
    <property type="project" value="GO_Central"/>
</dbReference>
<dbReference type="GO" id="GO:0006355">
    <property type="term" value="P:regulation of DNA-templated transcription"/>
    <property type="evidence" value="ECO:0000318"/>
    <property type="project" value="GO_Central"/>
</dbReference>
<dbReference type="CDD" id="cd08420">
    <property type="entry name" value="PBP2_CysL_like"/>
    <property type="match status" value="1"/>
</dbReference>
<dbReference type="FunFam" id="1.10.10.10:FF:000001">
    <property type="entry name" value="LysR family transcriptional regulator"/>
    <property type="match status" value="1"/>
</dbReference>
<dbReference type="Gene3D" id="3.40.190.290">
    <property type="match status" value="1"/>
</dbReference>
<dbReference type="Gene3D" id="1.10.10.10">
    <property type="entry name" value="Winged helix-like DNA-binding domain superfamily/Winged helix DNA-binding domain"/>
    <property type="match status" value="1"/>
</dbReference>
<dbReference type="InterPro" id="IPR005119">
    <property type="entry name" value="LysR_subst-bd"/>
</dbReference>
<dbReference type="InterPro" id="IPR000847">
    <property type="entry name" value="Tscrpt_reg_HTH_LysR"/>
</dbReference>
<dbReference type="InterPro" id="IPR036388">
    <property type="entry name" value="WH-like_DNA-bd_sf"/>
</dbReference>
<dbReference type="InterPro" id="IPR036390">
    <property type="entry name" value="WH_DNA-bd_sf"/>
</dbReference>
<dbReference type="PANTHER" id="PTHR30126">
    <property type="entry name" value="HTH-TYPE TRANSCRIPTIONAL REGULATOR"/>
    <property type="match status" value="1"/>
</dbReference>
<dbReference type="PANTHER" id="PTHR30126:SF39">
    <property type="entry name" value="HTH-TYPE TRANSCRIPTIONAL REGULATOR CYSL"/>
    <property type="match status" value="1"/>
</dbReference>
<dbReference type="Pfam" id="PF00126">
    <property type="entry name" value="HTH_1"/>
    <property type="match status" value="1"/>
</dbReference>
<dbReference type="Pfam" id="PF03466">
    <property type="entry name" value="LysR_substrate"/>
    <property type="match status" value="1"/>
</dbReference>
<dbReference type="PRINTS" id="PR00039">
    <property type="entry name" value="HTHLYSR"/>
</dbReference>
<dbReference type="SUPFAM" id="SSF53850">
    <property type="entry name" value="Periplasmic binding protein-like II"/>
    <property type="match status" value="1"/>
</dbReference>
<dbReference type="SUPFAM" id="SSF46785">
    <property type="entry name" value="Winged helix' DNA-binding domain"/>
    <property type="match status" value="1"/>
</dbReference>
<dbReference type="PROSITE" id="PS50931">
    <property type="entry name" value="HTH_LYSR"/>
    <property type="match status" value="1"/>
</dbReference>
<sequence length="307" mass="34485">MVLPFTLQQLRIFKAIASEKSFTQAAEILFVSQPSLSKQIKTLENRLGILLLNRTGNKILLTEAGVVFLQYSERILALCEESCRALNDLKDGERGNLKVGASQTIGAYLMPRVLTLFAQSYPQINLHIDIDSTRIIAKKVADRSLDIAVVGGDIPTGLKKNLEIEDFVEDELILIISKSHPFAKKKKKKISKEDLYHLNFITLNSNSTIHKFINNILIQNNIQTAQFNVIMELNSIEAIKTAVSLGLGAAFVSSSAIEKELELKTVEIITIENIRITRTLSIITNPDSHRSKAFDFFYNELWLLKNL</sequence>
<name>RBCR_THAPS</name>
<feature type="chain" id="PRO_0000280079" description="Probable RuBisCO transcriptional regulator">
    <location>
        <begin position="1"/>
        <end position="307"/>
    </location>
</feature>
<feature type="domain" description="HTH lysR-type" evidence="2">
    <location>
        <begin position="5"/>
        <end position="62"/>
    </location>
</feature>
<feature type="DNA-binding region" description="H-T-H motif" evidence="2">
    <location>
        <begin position="22"/>
        <end position="41"/>
    </location>
</feature>
<organism>
    <name type="scientific">Thalassiosira pseudonana</name>
    <name type="common">Marine diatom</name>
    <name type="synonym">Cyclotella nana</name>
    <dbReference type="NCBI Taxonomy" id="35128"/>
    <lineage>
        <taxon>Eukaryota</taxon>
        <taxon>Sar</taxon>
        <taxon>Stramenopiles</taxon>
        <taxon>Ochrophyta</taxon>
        <taxon>Bacillariophyta</taxon>
        <taxon>Coscinodiscophyceae</taxon>
        <taxon>Thalassiosirophycidae</taxon>
        <taxon>Thalassiosirales</taxon>
        <taxon>Thalassiosiraceae</taxon>
        <taxon>Thalassiosira</taxon>
    </lineage>
</organism>
<keyword id="KW-0150">Chloroplast</keyword>
<keyword id="KW-0238">DNA-binding</keyword>
<keyword id="KW-0934">Plastid</keyword>
<keyword id="KW-0804">Transcription</keyword>
<keyword id="KW-0805">Transcription regulation</keyword>